<gene>
    <name type="primary">Ddx59</name>
    <name evidence="1" type="synonym">Znhit5</name>
</gene>
<name>DDX59_RAT</name>
<proteinExistence type="evidence at transcript level"/>
<keyword id="KW-0067">ATP-binding</keyword>
<keyword id="KW-0963">Cytoplasm</keyword>
<keyword id="KW-0347">Helicase</keyword>
<keyword id="KW-0378">Hydrolase</keyword>
<keyword id="KW-1017">Isopeptide bond</keyword>
<keyword id="KW-0479">Metal-binding</keyword>
<keyword id="KW-0547">Nucleotide-binding</keyword>
<keyword id="KW-0539">Nucleus</keyword>
<keyword id="KW-0597">Phosphoprotein</keyword>
<keyword id="KW-1185">Reference proteome</keyword>
<keyword id="KW-0694">RNA-binding</keyword>
<keyword id="KW-0832">Ubl conjugation</keyword>
<keyword id="KW-0862">Zinc</keyword>
<keyword id="KW-0863">Zinc-finger</keyword>
<reference key="1">
    <citation type="journal article" date="2004" name="Genome Res.">
        <title>The status, quality, and expansion of the NIH full-length cDNA project: the Mammalian Gene Collection (MGC).</title>
        <authorList>
            <consortium name="The MGC Project Team"/>
        </authorList>
    </citation>
    <scope>NUCLEOTIDE SEQUENCE [LARGE SCALE MRNA]</scope>
    <source>
        <tissue>Kidney</tissue>
    </source>
</reference>
<organism>
    <name type="scientific">Rattus norvegicus</name>
    <name type="common">Rat</name>
    <dbReference type="NCBI Taxonomy" id="10116"/>
    <lineage>
        <taxon>Eukaryota</taxon>
        <taxon>Metazoa</taxon>
        <taxon>Chordata</taxon>
        <taxon>Craniata</taxon>
        <taxon>Vertebrata</taxon>
        <taxon>Euteleostomi</taxon>
        <taxon>Mammalia</taxon>
        <taxon>Eutheria</taxon>
        <taxon>Euarchontoglires</taxon>
        <taxon>Glires</taxon>
        <taxon>Rodentia</taxon>
        <taxon>Myomorpha</taxon>
        <taxon>Muroidea</taxon>
        <taxon>Muridae</taxon>
        <taxon>Murinae</taxon>
        <taxon>Rattus</taxon>
    </lineage>
</organism>
<protein>
    <recommendedName>
        <fullName>Probable ATP-dependent RNA helicase DDX59</fullName>
        <ecNumber>3.6.4.13</ecNumber>
    </recommendedName>
    <alternativeName>
        <fullName>DEAD box protein 59</fullName>
    </alternativeName>
    <alternativeName>
        <fullName evidence="1">Zinc finger HIT domain-containing protein 5</fullName>
    </alternativeName>
</protein>
<accession>Q66HG7</accession>
<comment type="catalytic activity">
    <reaction>
        <text>ATP + H2O = ADP + phosphate + H(+)</text>
        <dbReference type="Rhea" id="RHEA:13065"/>
        <dbReference type="ChEBI" id="CHEBI:15377"/>
        <dbReference type="ChEBI" id="CHEBI:15378"/>
        <dbReference type="ChEBI" id="CHEBI:30616"/>
        <dbReference type="ChEBI" id="CHEBI:43474"/>
        <dbReference type="ChEBI" id="CHEBI:456216"/>
        <dbReference type="EC" id="3.6.4.13"/>
    </reaction>
</comment>
<comment type="subunit">
    <text evidence="1">Interacts (via HIT-type zinc finger) with the RUVBL1/RUVBL2 complex in the presence of ADP.</text>
</comment>
<comment type="subcellular location">
    <subcellularLocation>
        <location evidence="1">Cytoplasm</location>
    </subcellularLocation>
    <subcellularLocation>
        <location evidence="1">Nucleus</location>
    </subcellularLocation>
    <text evidence="1">Exhibits granular localization in the nucleus, as well as in the cytoplasm.</text>
</comment>
<comment type="domain">
    <text>The Q motif is unique to and characteristic of the DEAD box family of RNA helicases and controls ATP binding and hydrolysis.</text>
</comment>
<comment type="similarity">
    <text evidence="5">Belongs to the DEAD box helicase family. DDX59 subfamily.</text>
</comment>
<dbReference type="EC" id="3.6.4.13"/>
<dbReference type="EMBL" id="BC081871">
    <property type="protein sequence ID" value="AAH81871.1"/>
    <property type="molecule type" value="mRNA"/>
</dbReference>
<dbReference type="RefSeq" id="NP_001005535.1">
    <property type="nucleotide sequence ID" value="NM_001005535.2"/>
</dbReference>
<dbReference type="RefSeq" id="NP_001177749.1">
    <property type="nucleotide sequence ID" value="NM_001190820.1"/>
</dbReference>
<dbReference type="SMR" id="Q66HG7"/>
<dbReference type="FunCoup" id="Q66HG7">
    <property type="interactions" value="2113"/>
</dbReference>
<dbReference type="STRING" id="10116.ENSRNOP00000047251"/>
<dbReference type="PhosphoSitePlus" id="Q66HG7"/>
<dbReference type="PaxDb" id="10116-ENSRNOP00000047251"/>
<dbReference type="Ensembl" id="ENSRNOT00000043798.4">
    <property type="protein sequence ID" value="ENSRNOP00000049858.2"/>
    <property type="gene ID" value="ENSRNOG00000042451.5"/>
</dbReference>
<dbReference type="GeneID" id="289402"/>
<dbReference type="KEGG" id="rno:289402"/>
<dbReference type="UCSC" id="RGD:1359520">
    <property type="organism name" value="rat"/>
</dbReference>
<dbReference type="AGR" id="RGD:1359520"/>
<dbReference type="CTD" id="83479"/>
<dbReference type="RGD" id="1359520">
    <property type="gene designation" value="Ddx59"/>
</dbReference>
<dbReference type="eggNOG" id="KOG0331">
    <property type="taxonomic scope" value="Eukaryota"/>
</dbReference>
<dbReference type="GeneTree" id="ENSGT00940000158639"/>
<dbReference type="InParanoid" id="Q66HG7"/>
<dbReference type="OrthoDB" id="360161at2759"/>
<dbReference type="PRO" id="PR:Q66HG7"/>
<dbReference type="Proteomes" id="UP000002494">
    <property type="component" value="Chromosome 13"/>
</dbReference>
<dbReference type="Bgee" id="ENSRNOG00000042451">
    <property type="expression patterns" value="Expressed in ovary and 19 other cell types or tissues"/>
</dbReference>
<dbReference type="ExpressionAtlas" id="Q66HG7">
    <property type="expression patterns" value="baseline and differential"/>
</dbReference>
<dbReference type="GO" id="GO:0005737">
    <property type="term" value="C:cytoplasm"/>
    <property type="evidence" value="ECO:0007669"/>
    <property type="project" value="UniProtKB-SubCell"/>
</dbReference>
<dbReference type="GO" id="GO:0005634">
    <property type="term" value="C:nucleus"/>
    <property type="evidence" value="ECO:0007669"/>
    <property type="project" value="UniProtKB-SubCell"/>
</dbReference>
<dbReference type="GO" id="GO:0005524">
    <property type="term" value="F:ATP binding"/>
    <property type="evidence" value="ECO:0007669"/>
    <property type="project" value="UniProtKB-KW"/>
</dbReference>
<dbReference type="GO" id="GO:0016887">
    <property type="term" value="F:ATP hydrolysis activity"/>
    <property type="evidence" value="ECO:0007669"/>
    <property type="project" value="RHEA"/>
</dbReference>
<dbReference type="GO" id="GO:0003729">
    <property type="term" value="F:mRNA binding"/>
    <property type="evidence" value="ECO:0000318"/>
    <property type="project" value="GO_Central"/>
</dbReference>
<dbReference type="GO" id="GO:0003724">
    <property type="term" value="F:RNA helicase activity"/>
    <property type="evidence" value="ECO:0000318"/>
    <property type="project" value="GO_Central"/>
</dbReference>
<dbReference type="GO" id="GO:0008270">
    <property type="term" value="F:zinc ion binding"/>
    <property type="evidence" value="ECO:0007669"/>
    <property type="project" value="UniProtKB-KW"/>
</dbReference>
<dbReference type="CDD" id="cd18787">
    <property type="entry name" value="SF2_C_DEAD"/>
    <property type="match status" value="1"/>
</dbReference>
<dbReference type="CDD" id="cd23022">
    <property type="entry name" value="zf-HIT_DDX59"/>
    <property type="match status" value="1"/>
</dbReference>
<dbReference type="FunFam" id="3.30.60.220:FF:000001">
    <property type="entry name" value="Probable ATP-dependent RNA helicase DDX59"/>
    <property type="match status" value="1"/>
</dbReference>
<dbReference type="FunFam" id="3.40.50.300:FF:001034">
    <property type="entry name" value="probable ATP-dependent RNA helicase DDX59"/>
    <property type="match status" value="1"/>
</dbReference>
<dbReference type="Gene3D" id="3.30.60.220">
    <property type="match status" value="1"/>
</dbReference>
<dbReference type="Gene3D" id="3.40.50.300">
    <property type="entry name" value="P-loop containing nucleotide triphosphate hydrolases"/>
    <property type="match status" value="3"/>
</dbReference>
<dbReference type="InterPro" id="IPR011545">
    <property type="entry name" value="DEAD/DEAH_box_helicase_dom"/>
</dbReference>
<dbReference type="InterPro" id="IPR050079">
    <property type="entry name" value="DEAD_box_RNA_helicase"/>
</dbReference>
<dbReference type="InterPro" id="IPR014001">
    <property type="entry name" value="Helicase_ATP-bd"/>
</dbReference>
<dbReference type="InterPro" id="IPR001650">
    <property type="entry name" value="Helicase_C-like"/>
</dbReference>
<dbReference type="InterPro" id="IPR027417">
    <property type="entry name" value="P-loop_NTPase"/>
</dbReference>
<dbReference type="InterPro" id="IPR014014">
    <property type="entry name" value="RNA_helicase_DEAD_Q_motif"/>
</dbReference>
<dbReference type="InterPro" id="IPR007529">
    <property type="entry name" value="Znf_HIT"/>
</dbReference>
<dbReference type="PANTHER" id="PTHR47959:SF1">
    <property type="entry name" value="ATP-DEPENDENT RNA HELICASE DBPA"/>
    <property type="match status" value="1"/>
</dbReference>
<dbReference type="PANTHER" id="PTHR47959">
    <property type="entry name" value="ATP-DEPENDENT RNA HELICASE RHLE-RELATED"/>
    <property type="match status" value="1"/>
</dbReference>
<dbReference type="Pfam" id="PF00270">
    <property type="entry name" value="DEAD"/>
    <property type="match status" value="1"/>
</dbReference>
<dbReference type="Pfam" id="PF00271">
    <property type="entry name" value="Helicase_C"/>
    <property type="match status" value="1"/>
</dbReference>
<dbReference type="Pfam" id="PF04438">
    <property type="entry name" value="zf-HIT"/>
    <property type="match status" value="1"/>
</dbReference>
<dbReference type="SMART" id="SM00487">
    <property type="entry name" value="DEXDc"/>
    <property type="match status" value="1"/>
</dbReference>
<dbReference type="SMART" id="SM00490">
    <property type="entry name" value="HELICc"/>
    <property type="match status" value="1"/>
</dbReference>
<dbReference type="SUPFAM" id="SSF52540">
    <property type="entry name" value="P-loop containing nucleoside triphosphate hydrolases"/>
    <property type="match status" value="2"/>
</dbReference>
<dbReference type="PROSITE" id="PS51192">
    <property type="entry name" value="HELICASE_ATP_BIND_1"/>
    <property type="match status" value="1"/>
</dbReference>
<dbReference type="PROSITE" id="PS51194">
    <property type="entry name" value="HELICASE_CTER"/>
    <property type="match status" value="1"/>
</dbReference>
<dbReference type="PROSITE" id="PS51195">
    <property type="entry name" value="Q_MOTIF"/>
    <property type="match status" value="1"/>
</dbReference>
<sequence>MFVPRSLKLKRNSNDDLKSCEAKKSKPEAAGLQLEGNRETLVLESVTKEAVTADRPGSASSTSSPSCQLAEVCSTGPDQGVKDSHPSEEPVKSFSKTQRWPEPGEPVCVVCGRYGEYICDKTDEDVCSLECKAKHLLQVKEEEGSLKPSSPQGAASEPESPLDAFYVYKEHPFIVALRDDQIETLKQQLGISVQGQEVARPIIDFEHCGFPETLNQNLKKSGYEVPTPIQMQMIPVGLLGRDILASADTGSGKTAAFLLPVIIRALPEDKTPSALILTPTRELAIQIERQAKELMRGLPRMKTVLLVGGLPLPPQLYRLQQHVKADTMLKMGFQQQVLDVLEHTPSDCQTVLVSATIPDSIDQLADQLLHNPVRIVTGDKNLPCSSVRQIILWVEDPAKKKKLFEILNDQKLFKPPVLVFVDCKLGADLLSEAVQKITGLSSTSIHSEKSQVERREILKGLLEGDYEVVVSTGILGRGLDLVNVKLVVNFDMPSSLDEYVHQVGRVGRLGQNGTAITFINNNSKRLFWDVAKRVKPTGSILPPQLLNSPYLHEQKRKEQQKDRQTQSSLVTGANLMDIIRKHEKSSSQK</sequence>
<evidence type="ECO:0000250" key="1">
    <source>
        <dbReference type="UniProtKB" id="Q5T1V6"/>
    </source>
</evidence>
<evidence type="ECO:0000255" key="2">
    <source>
        <dbReference type="PROSITE-ProRule" id="PRU00541"/>
    </source>
</evidence>
<evidence type="ECO:0000255" key="3">
    <source>
        <dbReference type="PROSITE-ProRule" id="PRU00542"/>
    </source>
</evidence>
<evidence type="ECO:0000256" key="4">
    <source>
        <dbReference type="SAM" id="MobiDB-lite"/>
    </source>
</evidence>
<evidence type="ECO:0000305" key="5"/>
<feature type="chain" id="PRO_0000282715" description="Probable ATP-dependent RNA helicase DDX59">
    <location>
        <begin position="1"/>
        <end position="589"/>
    </location>
</feature>
<feature type="domain" description="Helicase ATP-binding" evidence="2">
    <location>
        <begin position="234"/>
        <end position="375"/>
    </location>
</feature>
<feature type="domain" description="Helicase C-terminal" evidence="3">
    <location>
        <begin position="399"/>
        <end position="549"/>
    </location>
</feature>
<feature type="zinc finger region" description="HIT-type">
    <location>
        <begin position="104"/>
        <end position="133"/>
    </location>
</feature>
<feature type="region of interest" description="Disordered" evidence="4">
    <location>
        <begin position="1"/>
        <end position="36"/>
    </location>
</feature>
<feature type="region of interest" description="Disordered" evidence="4">
    <location>
        <begin position="48"/>
        <end position="98"/>
    </location>
</feature>
<feature type="short sequence motif" description="Q motif">
    <location>
        <begin position="203"/>
        <end position="231"/>
    </location>
</feature>
<feature type="short sequence motif" description="DEAD box">
    <location>
        <begin position="323"/>
        <end position="326"/>
    </location>
</feature>
<feature type="compositionally biased region" description="Basic and acidic residues" evidence="4">
    <location>
        <begin position="12"/>
        <end position="27"/>
    </location>
</feature>
<feature type="compositionally biased region" description="Basic and acidic residues" evidence="4">
    <location>
        <begin position="80"/>
        <end position="91"/>
    </location>
</feature>
<feature type="binding site" evidence="2">
    <location>
        <begin position="247"/>
        <end position="254"/>
    </location>
    <ligand>
        <name>ATP</name>
        <dbReference type="ChEBI" id="CHEBI:30616"/>
    </ligand>
</feature>
<feature type="modified residue" description="Phosphoserine" evidence="1">
    <location>
        <position position="64"/>
    </location>
</feature>
<feature type="modified residue" description="Phosphoserine" evidence="1">
    <location>
        <position position="156"/>
    </location>
</feature>
<feature type="modified residue" description="Phosphoserine" evidence="1">
    <location>
        <position position="160"/>
    </location>
</feature>
<feature type="cross-link" description="Glycyl lysine isopeptide (Lys-Gly) (interchain with G-Cter in SUMO2)" evidence="1">
    <location>
        <position position="26"/>
    </location>
</feature>